<dbReference type="EC" id="3.6.5.3" evidence="1"/>
<dbReference type="EMBL" id="BA000011">
    <property type="protein sequence ID" value="BAB60439.1"/>
    <property type="molecule type" value="Genomic_DNA"/>
</dbReference>
<dbReference type="RefSeq" id="WP_010917532.1">
    <property type="nucleotide sequence ID" value="NC_002689.2"/>
</dbReference>
<dbReference type="SMR" id="Q978W8"/>
<dbReference type="STRING" id="273116.gene:9382104"/>
<dbReference type="PaxDb" id="273116-14325536"/>
<dbReference type="GeneID" id="1441414"/>
<dbReference type="KEGG" id="tvo:TVG1337512"/>
<dbReference type="eggNOG" id="arCOG01563">
    <property type="taxonomic scope" value="Archaea"/>
</dbReference>
<dbReference type="HOGENOM" id="CLU_027154_0_1_2"/>
<dbReference type="OrthoDB" id="7798at2157"/>
<dbReference type="PhylomeDB" id="Q978W8"/>
<dbReference type="Proteomes" id="UP000001017">
    <property type="component" value="Chromosome"/>
</dbReference>
<dbReference type="GO" id="GO:0005829">
    <property type="term" value="C:cytosol"/>
    <property type="evidence" value="ECO:0007669"/>
    <property type="project" value="TreeGrafter"/>
</dbReference>
<dbReference type="GO" id="GO:0005525">
    <property type="term" value="F:GTP binding"/>
    <property type="evidence" value="ECO:0007669"/>
    <property type="project" value="UniProtKB-UniRule"/>
</dbReference>
<dbReference type="GO" id="GO:0003924">
    <property type="term" value="F:GTPase activity"/>
    <property type="evidence" value="ECO:0007669"/>
    <property type="project" value="InterPro"/>
</dbReference>
<dbReference type="GO" id="GO:0046872">
    <property type="term" value="F:metal ion binding"/>
    <property type="evidence" value="ECO:0007669"/>
    <property type="project" value="UniProtKB-KW"/>
</dbReference>
<dbReference type="GO" id="GO:0003746">
    <property type="term" value="F:translation elongation factor activity"/>
    <property type="evidence" value="ECO:0007669"/>
    <property type="project" value="UniProtKB-UniRule"/>
</dbReference>
<dbReference type="GO" id="GO:0003743">
    <property type="term" value="F:translation initiation factor activity"/>
    <property type="evidence" value="ECO:0007669"/>
    <property type="project" value="UniProtKB-KW"/>
</dbReference>
<dbReference type="GO" id="GO:0000049">
    <property type="term" value="F:tRNA binding"/>
    <property type="evidence" value="ECO:0007669"/>
    <property type="project" value="InterPro"/>
</dbReference>
<dbReference type="GO" id="GO:0001731">
    <property type="term" value="P:formation of translation preinitiation complex"/>
    <property type="evidence" value="ECO:0007669"/>
    <property type="project" value="TreeGrafter"/>
</dbReference>
<dbReference type="CDD" id="cd01888">
    <property type="entry name" value="eIF2_gamma"/>
    <property type="match status" value="1"/>
</dbReference>
<dbReference type="CDD" id="cd03688">
    <property type="entry name" value="eIF2_gamma_II"/>
    <property type="match status" value="1"/>
</dbReference>
<dbReference type="CDD" id="cd15490">
    <property type="entry name" value="eIF2_gamma_III"/>
    <property type="match status" value="1"/>
</dbReference>
<dbReference type="FunFam" id="3.40.50.300:FF:000065">
    <property type="entry name" value="Eukaryotic translation initiation factor 2 subunit gamma"/>
    <property type="match status" value="1"/>
</dbReference>
<dbReference type="FunFam" id="2.40.30.10:FF:000075">
    <property type="entry name" value="Translation initiation factor 2 subunit gamma"/>
    <property type="match status" value="1"/>
</dbReference>
<dbReference type="Gene3D" id="3.40.50.300">
    <property type="entry name" value="P-loop containing nucleotide triphosphate hydrolases"/>
    <property type="match status" value="1"/>
</dbReference>
<dbReference type="Gene3D" id="2.40.30.10">
    <property type="entry name" value="Translation factors"/>
    <property type="match status" value="2"/>
</dbReference>
<dbReference type="HAMAP" id="MF_00119">
    <property type="entry name" value="eIF_2_gamma"/>
    <property type="match status" value="1"/>
</dbReference>
<dbReference type="InterPro" id="IPR050543">
    <property type="entry name" value="eIF2G"/>
</dbReference>
<dbReference type="InterPro" id="IPR015256">
    <property type="entry name" value="eIF2g_C"/>
</dbReference>
<dbReference type="InterPro" id="IPR044127">
    <property type="entry name" value="eIF2g_dom_2"/>
</dbReference>
<dbReference type="InterPro" id="IPR044128">
    <property type="entry name" value="eIF2g_GTP-bd"/>
</dbReference>
<dbReference type="InterPro" id="IPR027417">
    <property type="entry name" value="P-loop_NTPase"/>
</dbReference>
<dbReference type="InterPro" id="IPR005225">
    <property type="entry name" value="Small_GTP-bd"/>
</dbReference>
<dbReference type="InterPro" id="IPR000795">
    <property type="entry name" value="T_Tr_GTP-bd_dom"/>
</dbReference>
<dbReference type="InterPro" id="IPR022424">
    <property type="entry name" value="TIF2_gsu"/>
</dbReference>
<dbReference type="InterPro" id="IPR009000">
    <property type="entry name" value="Transl_B-barrel_sf"/>
</dbReference>
<dbReference type="InterPro" id="IPR009001">
    <property type="entry name" value="Transl_elong_EF1A/Init_IF2_C"/>
</dbReference>
<dbReference type="NCBIfam" id="TIGR03680">
    <property type="entry name" value="eif2g_arch"/>
    <property type="match status" value="1"/>
</dbReference>
<dbReference type="NCBIfam" id="NF003077">
    <property type="entry name" value="PRK04000.1"/>
    <property type="match status" value="1"/>
</dbReference>
<dbReference type="NCBIfam" id="TIGR00231">
    <property type="entry name" value="small_GTP"/>
    <property type="match status" value="1"/>
</dbReference>
<dbReference type="PANTHER" id="PTHR42854">
    <property type="entry name" value="EUKARYOTIC TRANSLATION INITIATION FACTOR 2 SUBUNIT 3 FAMILY MEMBER"/>
    <property type="match status" value="1"/>
</dbReference>
<dbReference type="PANTHER" id="PTHR42854:SF3">
    <property type="entry name" value="EUKARYOTIC TRANSLATION INITIATION FACTOR 2 SUBUNIT 3-RELATED"/>
    <property type="match status" value="1"/>
</dbReference>
<dbReference type="Pfam" id="PF09173">
    <property type="entry name" value="eIF2_C"/>
    <property type="match status" value="1"/>
</dbReference>
<dbReference type="Pfam" id="PF00009">
    <property type="entry name" value="GTP_EFTU"/>
    <property type="match status" value="1"/>
</dbReference>
<dbReference type="PRINTS" id="PR00315">
    <property type="entry name" value="ELONGATNFCT"/>
</dbReference>
<dbReference type="SUPFAM" id="SSF50465">
    <property type="entry name" value="EF-Tu/eEF-1alpha/eIF2-gamma C-terminal domain"/>
    <property type="match status" value="1"/>
</dbReference>
<dbReference type="SUPFAM" id="SSF52540">
    <property type="entry name" value="P-loop containing nucleoside triphosphate hydrolases"/>
    <property type="match status" value="1"/>
</dbReference>
<dbReference type="SUPFAM" id="SSF50447">
    <property type="entry name" value="Translation proteins"/>
    <property type="match status" value="1"/>
</dbReference>
<dbReference type="PROSITE" id="PS51722">
    <property type="entry name" value="G_TR_2"/>
    <property type="match status" value="1"/>
</dbReference>
<proteinExistence type="inferred from homology"/>
<comment type="function">
    <text evidence="1">eIF-2 functions in the early steps of protein synthesis by forming a ternary complex with GTP and initiator tRNA.</text>
</comment>
<comment type="catalytic activity">
    <reaction evidence="1">
        <text>GTP + H2O = GDP + phosphate + H(+)</text>
        <dbReference type="Rhea" id="RHEA:19669"/>
        <dbReference type="ChEBI" id="CHEBI:15377"/>
        <dbReference type="ChEBI" id="CHEBI:15378"/>
        <dbReference type="ChEBI" id="CHEBI:37565"/>
        <dbReference type="ChEBI" id="CHEBI:43474"/>
        <dbReference type="ChEBI" id="CHEBI:58189"/>
        <dbReference type="EC" id="3.6.5.3"/>
    </reaction>
</comment>
<comment type="cofactor">
    <cofactor evidence="1">
        <name>Mg(2+)</name>
        <dbReference type="ChEBI" id="CHEBI:18420"/>
    </cofactor>
</comment>
<comment type="subunit">
    <text evidence="1">Heterotrimer composed of an alpha, a beta and a gamma chain.</text>
</comment>
<comment type="similarity">
    <text evidence="1">Belongs to the TRAFAC class translation factor GTPase superfamily. Classic translation factor GTPase family. EIF2G subfamily.</text>
</comment>
<organism>
    <name type="scientific">Thermoplasma volcanium (strain ATCC 51530 / DSM 4299 / JCM 9571 / NBRC 15438 / GSS1)</name>
    <dbReference type="NCBI Taxonomy" id="273116"/>
    <lineage>
        <taxon>Archaea</taxon>
        <taxon>Methanobacteriati</taxon>
        <taxon>Thermoplasmatota</taxon>
        <taxon>Thermoplasmata</taxon>
        <taxon>Thermoplasmatales</taxon>
        <taxon>Thermoplasmataceae</taxon>
        <taxon>Thermoplasma</taxon>
    </lineage>
</organism>
<protein>
    <recommendedName>
        <fullName evidence="1">Translation initiation factor 2 subunit gamma</fullName>
        <ecNumber evidence="1">3.6.5.3</ecNumber>
    </recommendedName>
    <alternativeName>
        <fullName evidence="1">aIF2-gamma</fullName>
    </alternativeName>
    <alternativeName>
        <fullName evidence="1">eIF-2-gamma</fullName>
    </alternativeName>
</protein>
<reference key="1">
    <citation type="journal article" date="2000" name="Proc. Natl. Acad. Sci. U.S.A.">
        <title>Archaeal adaptation to higher temperatures revealed by genomic sequence of Thermoplasma volcanium.</title>
        <authorList>
            <person name="Kawashima T."/>
            <person name="Amano N."/>
            <person name="Koike H."/>
            <person name="Makino S."/>
            <person name="Higuchi S."/>
            <person name="Kawashima-Ohya Y."/>
            <person name="Watanabe K."/>
            <person name="Yamazaki M."/>
            <person name="Kanehori K."/>
            <person name="Kawamoto T."/>
            <person name="Nunoshiba T."/>
            <person name="Yamamoto Y."/>
            <person name="Aramaki H."/>
            <person name="Makino K."/>
            <person name="Suzuki M."/>
        </authorList>
    </citation>
    <scope>NUCLEOTIDE SEQUENCE [LARGE SCALE GENOMIC DNA]</scope>
    <source>
        <strain>ATCC 51530 / DSM 4299 / JCM 9571 / NBRC 15438 / GSS1</strain>
    </source>
</reference>
<name>IF2G_THEVO</name>
<feature type="chain" id="PRO_0000137466" description="Translation initiation factor 2 subunit gamma">
    <location>
        <begin position="1"/>
        <end position="411"/>
    </location>
</feature>
<feature type="domain" description="tr-type G" evidence="1">
    <location>
        <begin position="9"/>
        <end position="201"/>
    </location>
</feature>
<feature type="region of interest" description="G1" evidence="1">
    <location>
        <begin position="18"/>
        <end position="25"/>
    </location>
</feature>
<feature type="region of interest" description="G2" evidence="1">
    <location>
        <begin position="46"/>
        <end position="50"/>
    </location>
</feature>
<feature type="region of interest" description="G3" evidence="1">
    <location>
        <begin position="88"/>
        <end position="91"/>
    </location>
</feature>
<feature type="region of interest" description="G4" evidence="1">
    <location>
        <begin position="144"/>
        <end position="147"/>
    </location>
</feature>
<feature type="region of interest" description="G5" evidence="1">
    <location>
        <begin position="179"/>
        <end position="181"/>
    </location>
</feature>
<feature type="binding site" evidence="1">
    <location>
        <begin position="21"/>
        <end position="26"/>
    </location>
    <ligand>
        <name>GTP</name>
        <dbReference type="ChEBI" id="CHEBI:37565"/>
    </ligand>
</feature>
<feature type="binding site" evidence="1">
    <location>
        <position position="21"/>
    </location>
    <ligand>
        <name>Mg(2+)</name>
        <dbReference type="ChEBI" id="CHEBI:18420"/>
        <label>2</label>
    </ligand>
</feature>
<feature type="binding site" evidence="1">
    <location>
        <position position="25"/>
    </location>
    <ligand>
        <name>Mg(2+)</name>
        <dbReference type="ChEBI" id="CHEBI:18420"/>
        <label>1</label>
    </ligand>
</feature>
<feature type="binding site" evidence="1">
    <location>
        <position position="46"/>
    </location>
    <ligand>
        <name>Mg(2+)</name>
        <dbReference type="ChEBI" id="CHEBI:18420"/>
        <label>2</label>
    </ligand>
</feature>
<feature type="binding site" evidence="1">
    <location>
        <position position="48"/>
    </location>
    <ligand>
        <name>Mg(2+)</name>
        <dbReference type="ChEBI" id="CHEBI:18420"/>
        <label>1</label>
    </ligand>
</feature>
<feature type="binding site" evidence="1">
    <location>
        <begin position="144"/>
        <end position="147"/>
    </location>
    <ligand>
        <name>GTP</name>
        <dbReference type="ChEBI" id="CHEBI:37565"/>
    </ligand>
</feature>
<feature type="binding site" evidence="1">
    <location>
        <begin position="179"/>
        <end position="181"/>
    </location>
    <ligand>
        <name>GTP</name>
        <dbReference type="ChEBI" id="CHEBI:37565"/>
    </ligand>
</feature>
<sequence>MISKLKMPQPTVNIGMVGHVDHGKSTLTLALTGVKTDTHSEEIKRGISIKLGYADTPVYKCYDASGNPYYTRQPSENCELERVISIVDAPGHETLMATMLSGSALMNGALLVIAANEHCPQPQTREHLTALEIMGIKNIVIVQNKIDLVTRERALESYKEIKAFVKGSIAENAPIIPVSAYHNTNIDILFEAIEKYIPTPEYNEGSDPIMYIARSFDVNKPGTPIDQIKGGIIGGSLTQGSLKIGDEIEIVPGIQNTRGNKTVWTNVTTEVVSLMAGKYSYDMIKPGGLAAVGTKLDPFLTKGDAFTGRIAGYIGKVPPISFSMRLEAHLLKRVVGSDQELNVEPIRAKETLMFTVATANTVGVVSNVKGTDIEVSLKYPVAAFNGMRVAIGRRVLNRWRLIGYGVIESLE</sequence>
<gene>
    <name evidence="1" type="primary">eif2g</name>
    <name type="ordered locus">TV1297</name>
    <name type="ORF">TVG1337512</name>
</gene>
<accession>Q978W8</accession>
<evidence type="ECO:0000255" key="1">
    <source>
        <dbReference type="HAMAP-Rule" id="MF_00119"/>
    </source>
</evidence>
<keyword id="KW-0342">GTP-binding</keyword>
<keyword id="KW-0378">Hydrolase</keyword>
<keyword id="KW-0396">Initiation factor</keyword>
<keyword id="KW-0460">Magnesium</keyword>
<keyword id="KW-0479">Metal-binding</keyword>
<keyword id="KW-0547">Nucleotide-binding</keyword>
<keyword id="KW-0648">Protein biosynthesis</keyword>